<evidence type="ECO:0000255" key="1">
    <source>
        <dbReference type="HAMAP-Rule" id="MF_03123"/>
    </source>
</evidence>
<evidence type="ECO:0000255" key="2">
    <source>
        <dbReference type="PROSITE-ProRule" id="PRU01266"/>
    </source>
</evidence>
<dbReference type="EC" id="2.8.1.8" evidence="1"/>
<dbReference type="EMBL" id="DS985264">
    <property type="protein sequence ID" value="EDV19926.1"/>
    <property type="molecule type" value="Genomic_DNA"/>
</dbReference>
<dbReference type="RefSeq" id="XP_002117516.1">
    <property type="nucleotide sequence ID" value="XM_002117480.1"/>
</dbReference>
<dbReference type="SMR" id="B3SBB5"/>
<dbReference type="FunCoup" id="B3SBB5">
    <property type="interactions" value="1527"/>
</dbReference>
<dbReference type="STRING" id="10228.B3SBB5"/>
<dbReference type="EnsemblMetazoa" id="TriadT38449">
    <property type="protein sequence ID" value="TriadP38449"/>
    <property type="gene ID" value="TriadG38449"/>
</dbReference>
<dbReference type="GeneID" id="6758779"/>
<dbReference type="KEGG" id="tad:TRIADDRAFT_38449"/>
<dbReference type="CTD" id="6758779"/>
<dbReference type="eggNOG" id="KOG2672">
    <property type="taxonomic scope" value="Eukaryota"/>
</dbReference>
<dbReference type="HOGENOM" id="CLU_033144_2_0_1"/>
<dbReference type="InParanoid" id="B3SBB5"/>
<dbReference type="OMA" id="PYCDIDF"/>
<dbReference type="OrthoDB" id="3231at2759"/>
<dbReference type="PhylomeDB" id="B3SBB5"/>
<dbReference type="UniPathway" id="UPA00538">
    <property type="reaction ID" value="UER00593"/>
</dbReference>
<dbReference type="Proteomes" id="UP000009022">
    <property type="component" value="Unassembled WGS sequence"/>
</dbReference>
<dbReference type="GO" id="GO:0005739">
    <property type="term" value="C:mitochondrion"/>
    <property type="evidence" value="ECO:0000318"/>
    <property type="project" value="GO_Central"/>
</dbReference>
<dbReference type="GO" id="GO:0051539">
    <property type="term" value="F:4 iron, 4 sulfur cluster binding"/>
    <property type="evidence" value="ECO:0007669"/>
    <property type="project" value="UniProtKB-UniRule"/>
</dbReference>
<dbReference type="GO" id="GO:0016992">
    <property type="term" value="F:lipoate synthase activity"/>
    <property type="evidence" value="ECO:0000318"/>
    <property type="project" value="GO_Central"/>
</dbReference>
<dbReference type="GO" id="GO:0046872">
    <property type="term" value="F:metal ion binding"/>
    <property type="evidence" value="ECO:0007669"/>
    <property type="project" value="UniProtKB-KW"/>
</dbReference>
<dbReference type="GO" id="GO:0009107">
    <property type="term" value="P:lipoate biosynthetic process"/>
    <property type="evidence" value="ECO:0000318"/>
    <property type="project" value="GO_Central"/>
</dbReference>
<dbReference type="CDD" id="cd01335">
    <property type="entry name" value="Radical_SAM"/>
    <property type="match status" value="1"/>
</dbReference>
<dbReference type="FunFam" id="3.20.20.70:FF:000036">
    <property type="entry name" value="Lipoyl synthase, mitochondrial"/>
    <property type="match status" value="1"/>
</dbReference>
<dbReference type="Gene3D" id="3.20.20.70">
    <property type="entry name" value="Aldolase class I"/>
    <property type="match status" value="1"/>
</dbReference>
<dbReference type="HAMAP" id="MF_00206">
    <property type="entry name" value="Lipoyl_synth"/>
    <property type="match status" value="1"/>
</dbReference>
<dbReference type="InterPro" id="IPR013785">
    <property type="entry name" value="Aldolase_TIM"/>
</dbReference>
<dbReference type="InterPro" id="IPR006638">
    <property type="entry name" value="Elp3/MiaA/NifB-like_rSAM"/>
</dbReference>
<dbReference type="InterPro" id="IPR031691">
    <property type="entry name" value="LIAS_N"/>
</dbReference>
<dbReference type="InterPro" id="IPR003698">
    <property type="entry name" value="Lipoyl_synth"/>
</dbReference>
<dbReference type="InterPro" id="IPR007197">
    <property type="entry name" value="rSAM"/>
</dbReference>
<dbReference type="NCBIfam" id="TIGR00510">
    <property type="entry name" value="lipA"/>
    <property type="match status" value="1"/>
</dbReference>
<dbReference type="NCBIfam" id="NF004019">
    <property type="entry name" value="PRK05481.1"/>
    <property type="match status" value="1"/>
</dbReference>
<dbReference type="NCBIfam" id="NF009544">
    <property type="entry name" value="PRK12928.1"/>
    <property type="match status" value="1"/>
</dbReference>
<dbReference type="PANTHER" id="PTHR10949">
    <property type="entry name" value="LIPOYL SYNTHASE"/>
    <property type="match status" value="1"/>
</dbReference>
<dbReference type="PANTHER" id="PTHR10949:SF0">
    <property type="entry name" value="LIPOYL SYNTHASE, MITOCHONDRIAL"/>
    <property type="match status" value="1"/>
</dbReference>
<dbReference type="Pfam" id="PF16881">
    <property type="entry name" value="LIAS_N"/>
    <property type="match status" value="1"/>
</dbReference>
<dbReference type="Pfam" id="PF04055">
    <property type="entry name" value="Radical_SAM"/>
    <property type="match status" value="1"/>
</dbReference>
<dbReference type="PIRSF" id="PIRSF005963">
    <property type="entry name" value="Lipoyl_synth"/>
    <property type="match status" value="1"/>
</dbReference>
<dbReference type="SFLD" id="SFLDF00271">
    <property type="entry name" value="lipoyl_synthase"/>
    <property type="match status" value="1"/>
</dbReference>
<dbReference type="SFLD" id="SFLDS00029">
    <property type="entry name" value="Radical_SAM"/>
    <property type="match status" value="1"/>
</dbReference>
<dbReference type="SMART" id="SM00729">
    <property type="entry name" value="Elp3"/>
    <property type="match status" value="1"/>
</dbReference>
<dbReference type="SUPFAM" id="SSF102114">
    <property type="entry name" value="Radical SAM enzymes"/>
    <property type="match status" value="1"/>
</dbReference>
<dbReference type="PROSITE" id="PS51918">
    <property type="entry name" value="RADICAL_SAM"/>
    <property type="match status" value="1"/>
</dbReference>
<sequence length="350" mass="38945">MPSTVASIRDYSNIPKSKREEIANGPGLEDFIVKSPTSLNTLFIYYSNFSLPLPPWLKTTIPTSNSYNKLNKDLRNLKLHTVCEEARCPNIGECWGGESGTATATIMVLGDTCTRGCRFCSVKTARKPPPPDPDEPVNTAIALAQWGLDYVVLTSVDRDDLSDGGSNHFAETVKEIKKRNLSMLVETLTPDFRGDKAAIATVVNAGVDVYAHNVETVKNLQWLVRDPRANYEQSLEVLSYAKIVNPNLVTKTSIMLGLGETDESILQTMKDLRSIDVDCITLGQYMQPTRYHIKVKEYVTPAKFQHWEKVGNELGFAYTASGPLVRSSYKAGEFYLKNLVHKRNKTNGSD</sequence>
<proteinExistence type="inferred from homology"/>
<keyword id="KW-0004">4Fe-4S</keyword>
<keyword id="KW-0408">Iron</keyword>
<keyword id="KW-0411">Iron-sulfur</keyword>
<keyword id="KW-0479">Metal-binding</keyword>
<keyword id="KW-0496">Mitochondrion</keyword>
<keyword id="KW-1185">Reference proteome</keyword>
<keyword id="KW-0949">S-adenosyl-L-methionine</keyword>
<keyword id="KW-0808">Transferase</keyword>
<protein>
    <recommendedName>
        <fullName evidence="1">Lipoyl synthase, mitochondrial</fullName>
        <ecNumber evidence="1">2.8.1.8</ecNumber>
    </recommendedName>
    <alternativeName>
        <fullName evidence="1">Lipoate synthase</fullName>
        <shortName evidence="1">LS</shortName>
        <shortName evidence="1">Lip-syn</shortName>
    </alternativeName>
    <alternativeName>
        <fullName evidence="1">Lipoic acid synthase</fullName>
    </alternativeName>
</protein>
<comment type="function">
    <text evidence="1">Catalyzes the radical-mediated insertion of two sulfur atoms into the C-6 and C-8 positions of the octanoyl moiety bound to the lipoyl domains of lipoate-dependent enzymes, thereby converting the octanoylated domains into lipoylated derivatives.</text>
</comment>
<comment type="catalytic activity">
    <reaction evidence="1">
        <text>[[Fe-S] cluster scaffold protein carrying a second [4Fe-4S](2+) cluster] + N(6)-octanoyl-L-lysyl-[protein] + 2 oxidized [2Fe-2S]-[ferredoxin] + 2 S-adenosyl-L-methionine + 4 H(+) = [[Fe-S] cluster scaffold protein] + N(6)-[(R)-dihydrolipoyl]-L-lysyl-[protein] + 4 Fe(3+) + 2 hydrogen sulfide + 2 5'-deoxyadenosine + 2 L-methionine + 2 reduced [2Fe-2S]-[ferredoxin]</text>
        <dbReference type="Rhea" id="RHEA:16585"/>
        <dbReference type="Rhea" id="RHEA-COMP:9928"/>
        <dbReference type="Rhea" id="RHEA-COMP:10000"/>
        <dbReference type="Rhea" id="RHEA-COMP:10001"/>
        <dbReference type="Rhea" id="RHEA-COMP:10475"/>
        <dbReference type="Rhea" id="RHEA-COMP:14568"/>
        <dbReference type="Rhea" id="RHEA-COMP:14569"/>
        <dbReference type="ChEBI" id="CHEBI:15378"/>
        <dbReference type="ChEBI" id="CHEBI:17319"/>
        <dbReference type="ChEBI" id="CHEBI:29034"/>
        <dbReference type="ChEBI" id="CHEBI:29919"/>
        <dbReference type="ChEBI" id="CHEBI:33722"/>
        <dbReference type="ChEBI" id="CHEBI:33737"/>
        <dbReference type="ChEBI" id="CHEBI:33738"/>
        <dbReference type="ChEBI" id="CHEBI:57844"/>
        <dbReference type="ChEBI" id="CHEBI:59789"/>
        <dbReference type="ChEBI" id="CHEBI:78809"/>
        <dbReference type="ChEBI" id="CHEBI:83100"/>
        <dbReference type="EC" id="2.8.1.8"/>
    </reaction>
</comment>
<comment type="cofactor">
    <cofactor evidence="1">
        <name>[4Fe-4S] cluster</name>
        <dbReference type="ChEBI" id="CHEBI:49883"/>
    </cofactor>
    <text evidence="1">Binds 2 [4Fe-4S] clusters per subunit. One cluster is coordinated with 3 cysteines and an exchangeable S-adenosyl-L-methionine.</text>
</comment>
<comment type="pathway">
    <text evidence="1">Protein modification; protein lipoylation via endogenous pathway; protein N(6)-(lipoyl)lysine from octanoyl-[acyl-carrier-protein]: step 2/2.</text>
</comment>
<comment type="subcellular location">
    <subcellularLocation>
        <location evidence="1">Mitochondrion</location>
    </subcellularLocation>
</comment>
<comment type="miscellaneous">
    <text evidence="1">This protein may be expected to contain an N-terminal transit peptide but none has been predicted.</text>
</comment>
<comment type="similarity">
    <text evidence="1">Belongs to the radical SAM superfamily. Lipoyl synthase family.</text>
</comment>
<feature type="chain" id="PRO_0000398298" description="Lipoyl synthase, mitochondrial">
    <location>
        <begin position="1"/>
        <end position="350"/>
    </location>
</feature>
<feature type="domain" description="Radical SAM core" evidence="2">
    <location>
        <begin position="96"/>
        <end position="317"/>
    </location>
</feature>
<feature type="binding site" evidence="1">
    <location>
        <position position="83"/>
    </location>
    <ligand>
        <name>[4Fe-4S] cluster</name>
        <dbReference type="ChEBI" id="CHEBI:49883"/>
        <label>1</label>
    </ligand>
</feature>
<feature type="binding site" evidence="1">
    <location>
        <position position="88"/>
    </location>
    <ligand>
        <name>[4Fe-4S] cluster</name>
        <dbReference type="ChEBI" id="CHEBI:49883"/>
        <label>1</label>
    </ligand>
</feature>
<feature type="binding site" evidence="1">
    <location>
        <position position="94"/>
    </location>
    <ligand>
        <name>[4Fe-4S] cluster</name>
        <dbReference type="ChEBI" id="CHEBI:49883"/>
        <label>1</label>
    </ligand>
</feature>
<feature type="binding site" evidence="1">
    <location>
        <position position="113"/>
    </location>
    <ligand>
        <name>[4Fe-4S] cluster</name>
        <dbReference type="ChEBI" id="CHEBI:49883"/>
        <label>2</label>
        <note>4Fe-4S-S-AdoMet</note>
    </ligand>
</feature>
<feature type="binding site" evidence="1">
    <location>
        <position position="117"/>
    </location>
    <ligand>
        <name>[4Fe-4S] cluster</name>
        <dbReference type="ChEBI" id="CHEBI:49883"/>
        <label>2</label>
        <note>4Fe-4S-S-AdoMet</note>
    </ligand>
</feature>
<feature type="binding site" evidence="1">
    <location>
        <position position="120"/>
    </location>
    <ligand>
        <name>[4Fe-4S] cluster</name>
        <dbReference type="ChEBI" id="CHEBI:49883"/>
        <label>2</label>
        <note>4Fe-4S-S-AdoMet</note>
    </ligand>
</feature>
<feature type="binding site" evidence="1">
    <location>
        <position position="328"/>
    </location>
    <ligand>
        <name>[4Fe-4S] cluster</name>
        <dbReference type="ChEBI" id="CHEBI:49883"/>
        <label>1</label>
    </ligand>
</feature>
<accession>B3SBB5</accession>
<reference key="1">
    <citation type="journal article" date="2008" name="Nature">
        <title>The Trichoplax genome and the nature of placozoans.</title>
        <authorList>
            <person name="Srivastava M."/>
            <person name="Begovic E."/>
            <person name="Chapman J."/>
            <person name="Putnam N.H."/>
            <person name="Hellsten U."/>
            <person name="Kawashima T."/>
            <person name="Kuo A."/>
            <person name="Mitros T."/>
            <person name="Salamov A."/>
            <person name="Carpenter M.L."/>
            <person name="Signorovitch A.Y."/>
            <person name="Moreno M.A."/>
            <person name="Kamm K."/>
            <person name="Grimwood J."/>
            <person name="Schmutz J."/>
            <person name="Shapiro H."/>
            <person name="Grigoriev I.V."/>
            <person name="Buss L.W."/>
            <person name="Schierwater B."/>
            <person name="Dellaporta S.L."/>
            <person name="Rokhsar D.S."/>
        </authorList>
    </citation>
    <scope>NUCLEOTIDE SEQUENCE [LARGE SCALE GENOMIC DNA]</scope>
    <source>
        <strain>Grell-BS-1999</strain>
    </source>
</reference>
<organism>
    <name type="scientific">Trichoplax adhaerens</name>
    <name type="common">Trichoplax reptans</name>
    <dbReference type="NCBI Taxonomy" id="10228"/>
    <lineage>
        <taxon>Eukaryota</taxon>
        <taxon>Metazoa</taxon>
        <taxon>Placozoa</taxon>
        <taxon>Uniplacotomia</taxon>
        <taxon>Trichoplacea</taxon>
        <taxon>Trichoplacidae</taxon>
        <taxon>Trichoplax</taxon>
    </lineage>
</organism>
<gene>
    <name type="ORF">TRIADDRAFT_38449</name>
</gene>
<name>LIAS_TRIAD</name>